<sequence length="463" mass="51897">MSDQSNQKELLWQSRFSEPFDREALKFSSSVHVDGLLYREDIQGSIAHATMLGEQGIISKEEAGQIVTGLKAVEKEIESGELTPVWEDEDIHTVIENRLKELIGPTAGKLHSGRSRNDQVATDTRLYLRRNIDRIGELLKAMQSTLLDKAEQYKHTIMFGYTHLQRAQPISAGHYYMAWHSMFGRDAQRLADLRKRANISPLGAAAFAGSTLPLDPARSAELLEFDGVFTNSIDAVSDRDLVIEFVSACSMIMMHLSRFSEDVILWSSAEFNYLSISDAFATGSSIMPQKKNADIAELVRGKTGRVYGNLMNLLTIMKGLPLSYNRDMQEDKPPLFDTAETTASSLSVFRRMIEKTWLNEERLARLTAEDLSLATEIAEYLVKKQIPFRDAHRITGKIVAYAIEQGKTLPTISLDEYRTFSEAFDEGIYDDLKPDASVNSKKTAGSCSFKSVEEQIARAKAAR</sequence>
<organism>
    <name type="scientific">Chlorobaculum tepidum (strain ATCC 49652 / DSM 12025 / NBRC 103806 / TLS)</name>
    <name type="common">Chlorobium tepidum</name>
    <dbReference type="NCBI Taxonomy" id="194439"/>
    <lineage>
        <taxon>Bacteria</taxon>
        <taxon>Pseudomonadati</taxon>
        <taxon>Chlorobiota</taxon>
        <taxon>Chlorobiia</taxon>
        <taxon>Chlorobiales</taxon>
        <taxon>Chlorobiaceae</taxon>
        <taxon>Chlorobaculum</taxon>
    </lineage>
</organism>
<protein>
    <recommendedName>
        <fullName evidence="1">Argininosuccinate lyase</fullName>
        <shortName evidence="1">ASAL</shortName>
        <ecNumber evidence="1">4.3.2.1</ecNumber>
    </recommendedName>
    <alternativeName>
        <fullName evidence="1">Arginosuccinase</fullName>
    </alternativeName>
</protein>
<accession>Q8KDJ5</accession>
<reference key="1">
    <citation type="journal article" date="2002" name="Proc. Natl. Acad. Sci. U.S.A.">
        <title>The complete genome sequence of Chlorobium tepidum TLS, a photosynthetic, anaerobic, green-sulfur bacterium.</title>
        <authorList>
            <person name="Eisen J.A."/>
            <person name="Nelson K.E."/>
            <person name="Paulsen I.T."/>
            <person name="Heidelberg J.F."/>
            <person name="Wu M."/>
            <person name="Dodson R.J."/>
            <person name="DeBoy R.T."/>
            <person name="Gwinn M.L."/>
            <person name="Nelson W.C."/>
            <person name="Haft D.H."/>
            <person name="Hickey E.K."/>
            <person name="Peterson J.D."/>
            <person name="Durkin A.S."/>
            <person name="Kolonay J.F."/>
            <person name="Yang F."/>
            <person name="Holt I.E."/>
            <person name="Umayam L.A."/>
            <person name="Mason T.M."/>
            <person name="Brenner M."/>
            <person name="Shea T.P."/>
            <person name="Parksey D.S."/>
            <person name="Nierman W.C."/>
            <person name="Feldblyum T.V."/>
            <person name="Hansen C.L."/>
            <person name="Craven M.B."/>
            <person name="Radune D."/>
            <person name="Vamathevan J.J."/>
            <person name="Khouri H.M."/>
            <person name="White O."/>
            <person name="Gruber T.M."/>
            <person name="Ketchum K.A."/>
            <person name="Venter J.C."/>
            <person name="Tettelin H."/>
            <person name="Bryant D.A."/>
            <person name="Fraser C.M."/>
        </authorList>
    </citation>
    <scope>NUCLEOTIDE SEQUENCE [LARGE SCALE GENOMIC DNA]</scope>
    <source>
        <strain>ATCC 49652 / DSM 12025 / NBRC 103806 / TLS</strain>
    </source>
</reference>
<gene>
    <name evidence="1" type="primary">argH</name>
    <name type="ordered locus">CT1055</name>
</gene>
<feature type="chain" id="PRO_0000137757" description="Argininosuccinate lyase">
    <location>
        <begin position="1"/>
        <end position="463"/>
    </location>
</feature>
<dbReference type="EC" id="4.3.2.1" evidence="1"/>
<dbReference type="EMBL" id="AE006470">
    <property type="protein sequence ID" value="AAM72288.1"/>
    <property type="molecule type" value="Genomic_DNA"/>
</dbReference>
<dbReference type="RefSeq" id="NP_661946.1">
    <property type="nucleotide sequence ID" value="NC_002932.3"/>
</dbReference>
<dbReference type="RefSeq" id="WP_010932733.1">
    <property type="nucleotide sequence ID" value="NC_002932.3"/>
</dbReference>
<dbReference type="SMR" id="Q8KDJ5"/>
<dbReference type="STRING" id="194439.CT1055"/>
<dbReference type="EnsemblBacteria" id="AAM72288">
    <property type="protein sequence ID" value="AAM72288"/>
    <property type="gene ID" value="CT1055"/>
</dbReference>
<dbReference type="KEGG" id="cte:CT1055"/>
<dbReference type="PATRIC" id="fig|194439.7.peg.961"/>
<dbReference type="eggNOG" id="COG0165">
    <property type="taxonomic scope" value="Bacteria"/>
</dbReference>
<dbReference type="HOGENOM" id="CLU_027272_2_3_10"/>
<dbReference type="OrthoDB" id="9769623at2"/>
<dbReference type="UniPathway" id="UPA00068">
    <property type="reaction ID" value="UER00114"/>
</dbReference>
<dbReference type="Proteomes" id="UP000001007">
    <property type="component" value="Chromosome"/>
</dbReference>
<dbReference type="GO" id="GO:0005829">
    <property type="term" value="C:cytosol"/>
    <property type="evidence" value="ECO:0007669"/>
    <property type="project" value="TreeGrafter"/>
</dbReference>
<dbReference type="GO" id="GO:0004056">
    <property type="term" value="F:argininosuccinate lyase activity"/>
    <property type="evidence" value="ECO:0007669"/>
    <property type="project" value="UniProtKB-UniRule"/>
</dbReference>
<dbReference type="GO" id="GO:0042450">
    <property type="term" value="P:arginine biosynthetic process via ornithine"/>
    <property type="evidence" value="ECO:0007669"/>
    <property type="project" value="InterPro"/>
</dbReference>
<dbReference type="GO" id="GO:0006526">
    <property type="term" value="P:L-arginine biosynthetic process"/>
    <property type="evidence" value="ECO:0007669"/>
    <property type="project" value="UniProtKB-UniRule"/>
</dbReference>
<dbReference type="CDD" id="cd01359">
    <property type="entry name" value="Argininosuccinate_lyase"/>
    <property type="match status" value="1"/>
</dbReference>
<dbReference type="FunFam" id="1.10.275.10:FF:000002">
    <property type="entry name" value="Argininosuccinate lyase"/>
    <property type="match status" value="1"/>
</dbReference>
<dbReference type="FunFam" id="1.10.40.30:FF:000001">
    <property type="entry name" value="Argininosuccinate lyase"/>
    <property type="match status" value="1"/>
</dbReference>
<dbReference type="FunFam" id="1.20.200.10:FF:000015">
    <property type="entry name" value="argininosuccinate lyase isoform X2"/>
    <property type="match status" value="1"/>
</dbReference>
<dbReference type="Gene3D" id="1.10.40.30">
    <property type="entry name" value="Fumarase/aspartase (C-terminal domain)"/>
    <property type="match status" value="1"/>
</dbReference>
<dbReference type="Gene3D" id="1.20.200.10">
    <property type="entry name" value="Fumarase/aspartase (Central domain)"/>
    <property type="match status" value="1"/>
</dbReference>
<dbReference type="Gene3D" id="1.10.275.10">
    <property type="entry name" value="Fumarase/aspartase (N-terminal domain)"/>
    <property type="match status" value="1"/>
</dbReference>
<dbReference type="HAMAP" id="MF_00006">
    <property type="entry name" value="Arg_succ_lyase"/>
    <property type="match status" value="1"/>
</dbReference>
<dbReference type="InterPro" id="IPR029419">
    <property type="entry name" value="Arg_succ_lyase_C"/>
</dbReference>
<dbReference type="InterPro" id="IPR009049">
    <property type="entry name" value="Argininosuccinate_lyase"/>
</dbReference>
<dbReference type="InterPro" id="IPR024083">
    <property type="entry name" value="Fumarase/histidase_N"/>
</dbReference>
<dbReference type="InterPro" id="IPR020557">
    <property type="entry name" value="Fumarate_lyase_CS"/>
</dbReference>
<dbReference type="InterPro" id="IPR000362">
    <property type="entry name" value="Fumarate_lyase_fam"/>
</dbReference>
<dbReference type="InterPro" id="IPR022761">
    <property type="entry name" value="Fumarate_lyase_N"/>
</dbReference>
<dbReference type="InterPro" id="IPR008948">
    <property type="entry name" value="L-Aspartase-like"/>
</dbReference>
<dbReference type="NCBIfam" id="TIGR00838">
    <property type="entry name" value="argH"/>
    <property type="match status" value="1"/>
</dbReference>
<dbReference type="PANTHER" id="PTHR43814">
    <property type="entry name" value="ARGININOSUCCINATE LYASE"/>
    <property type="match status" value="1"/>
</dbReference>
<dbReference type="PANTHER" id="PTHR43814:SF1">
    <property type="entry name" value="ARGININOSUCCINATE LYASE"/>
    <property type="match status" value="1"/>
</dbReference>
<dbReference type="Pfam" id="PF14698">
    <property type="entry name" value="ASL_C2"/>
    <property type="match status" value="1"/>
</dbReference>
<dbReference type="Pfam" id="PF00206">
    <property type="entry name" value="Lyase_1"/>
    <property type="match status" value="1"/>
</dbReference>
<dbReference type="PRINTS" id="PR00145">
    <property type="entry name" value="ARGSUCLYASE"/>
</dbReference>
<dbReference type="PRINTS" id="PR00149">
    <property type="entry name" value="FUMRATELYASE"/>
</dbReference>
<dbReference type="SUPFAM" id="SSF48557">
    <property type="entry name" value="L-aspartase-like"/>
    <property type="match status" value="1"/>
</dbReference>
<dbReference type="PROSITE" id="PS00163">
    <property type="entry name" value="FUMARATE_LYASES"/>
    <property type="match status" value="1"/>
</dbReference>
<keyword id="KW-0028">Amino-acid biosynthesis</keyword>
<keyword id="KW-0055">Arginine biosynthesis</keyword>
<keyword id="KW-0963">Cytoplasm</keyword>
<keyword id="KW-0456">Lyase</keyword>
<keyword id="KW-1185">Reference proteome</keyword>
<name>ARLY_CHLTE</name>
<comment type="catalytic activity">
    <reaction evidence="1">
        <text>2-(N(omega)-L-arginino)succinate = fumarate + L-arginine</text>
        <dbReference type="Rhea" id="RHEA:24020"/>
        <dbReference type="ChEBI" id="CHEBI:29806"/>
        <dbReference type="ChEBI" id="CHEBI:32682"/>
        <dbReference type="ChEBI" id="CHEBI:57472"/>
        <dbReference type="EC" id="4.3.2.1"/>
    </reaction>
</comment>
<comment type="pathway">
    <text evidence="1">Amino-acid biosynthesis; L-arginine biosynthesis; L-arginine from L-ornithine and carbamoyl phosphate: step 3/3.</text>
</comment>
<comment type="subcellular location">
    <subcellularLocation>
        <location evidence="1">Cytoplasm</location>
    </subcellularLocation>
</comment>
<comment type="similarity">
    <text evidence="1">Belongs to the lyase 1 family. Argininosuccinate lyase subfamily.</text>
</comment>
<proteinExistence type="inferred from homology"/>
<evidence type="ECO:0000255" key="1">
    <source>
        <dbReference type="HAMAP-Rule" id="MF_00006"/>
    </source>
</evidence>